<proteinExistence type="inferred from homology"/>
<protein>
    <recommendedName>
        <fullName evidence="1">Putative membrane protein insertion efficiency factor</fullName>
    </recommendedName>
</protein>
<evidence type="ECO:0000255" key="1">
    <source>
        <dbReference type="HAMAP-Rule" id="MF_00386"/>
    </source>
</evidence>
<keyword id="KW-0997">Cell inner membrane</keyword>
<keyword id="KW-1003">Cell membrane</keyword>
<keyword id="KW-0472">Membrane</keyword>
<sequence>MAPPLSPGSRVLIALIRVYQRLISPLLGPHCRFTPTCSSYGIEALRRFGVIKGSWLTVKRVLKCHPLHPGGDDPVPPGPFDTREH</sequence>
<comment type="function">
    <text evidence="1">Could be involved in insertion of integral membrane proteins into the membrane.</text>
</comment>
<comment type="subcellular location">
    <subcellularLocation>
        <location evidence="1">Cell inner membrane</location>
        <topology evidence="1">Peripheral membrane protein</topology>
        <orientation evidence="1">Cytoplasmic side</orientation>
    </subcellularLocation>
</comment>
<comment type="similarity">
    <text evidence="1">Belongs to the UPF0161 family.</text>
</comment>
<dbReference type="EMBL" id="CP000802">
    <property type="protein sequence ID" value="ABV08120.1"/>
    <property type="molecule type" value="Genomic_DNA"/>
</dbReference>
<dbReference type="RefSeq" id="WP_001307474.1">
    <property type="nucleotide sequence ID" value="NC_009800.1"/>
</dbReference>
<dbReference type="GeneID" id="97443257"/>
<dbReference type="KEGG" id="ecx:EcHS_A3918"/>
<dbReference type="HOGENOM" id="CLU_144811_5_2_6"/>
<dbReference type="GO" id="GO:0005886">
    <property type="term" value="C:plasma membrane"/>
    <property type="evidence" value="ECO:0007669"/>
    <property type="project" value="UniProtKB-SubCell"/>
</dbReference>
<dbReference type="HAMAP" id="MF_00386">
    <property type="entry name" value="UPF0161_YidD"/>
    <property type="match status" value="1"/>
</dbReference>
<dbReference type="InterPro" id="IPR002696">
    <property type="entry name" value="Membr_insert_effic_factor_YidD"/>
</dbReference>
<dbReference type="NCBIfam" id="TIGR00278">
    <property type="entry name" value="membrane protein insertion efficiency factor YidD"/>
    <property type="match status" value="1"/>
</dbReference>
<dbReference type="PANTHER" id="PTHR33383">
    <property type="entry name" value="MEMBRANE PROTEIN INSERTION EFFICIENCY FACTOR-RELATED"/>
    <property type="match status" value="1"/>
</dbReference>
<dbReference type="PANTHER" id="PTHR33383:SF1">
    <property type="entry name" value="MEMBRANE PROTEIN INSERTION EFFICIENCY FACTOR-RELATED"/>
    <property type="match status" value="1"/>
</dbReference>
<dbReference type="Pfam" id="PF01809">
    <property type="entry name" value="YidD"/>
    <property type="match status" value="1"/>
</dbReference>
<dbReference type="SMART" id="SM01234">
    <property type="entry name" value="Haemolytic"/>
    <property type="match status" value="1"/>
</dbReference>
<reference key="1">
    <citation type="journal article" date="2008" name="J. Bacteriol.">
        <title>The pangenome structure of Escherichia coli: comparative genomic analysis of E. coli commensal and pathogenic isolates.</title>
        <authorList>
            <person name="Rasko D.A."/>
            <person name="Rosovitz M.J."/>
            <person name="Myers G.S.A."/>
            <person name="Mongodin E.F."/>
            <person name="Fricke W.F."/>
            <person name="Gajer P."/>
            <person name="Crabtree J."/>
            <person name="Sebaihia M."/>
            <person name="Thomson N.R."/>
            <person name="Chaudhuri R."/>
            <person name="Henderson I.R."/>
            <person name="Sperandio V."/>
            <person name="Ravel J."/>
        </authorList>
    </citation>
    <scope>NUCLEOTIDE SEQUENCE [LARGE SCALE GENOMIC DNA]</scope>
    <source>
        <strain>HS</strain>
    </source>
</reference>
<organism>
    <name type="scientific">Escherichia coli O9:H4 (strain HS)</name>
    <dbReference type="NCBI Taxonomy" id="331112"/>
    <lineage>
        <taxon>Bacteria</taxon>
        <taxon>Pseudomonadati</taxon>
        <taxon>Pseudomonadota</taxon>
        <taxon>Gammaproteobacteria</taxon>
        <taxon>Enterobacterales</taxon>
        <taxon>Enterobacteriaceae</taxon>
        <taxon>Escherichia</taxon>
    </lineage>
</organism>
<gene>
    <name evidence="1" type="primary">yidD</name>
    <name type="ordered locus">EcHS_A3918</name>
</gene>
<name>YIDD_ECOHS</name>
<feature type="chain" id="PRO_1000060721" description="Putative membrane protein insertion efficiency factor">
    <location>
        <begin position="1"/>
        <end position="85"/>
    </location>
</feature>
<accession>A8A6G6</accession>